<keyword id="KW-0012">Acyltransferase</keyword>
<keyword id="KW-0997">Cell inner membrane</keyword>
<keyword id="KW-1003">Cell membrane</keyword>
<keyword id="KW-0444">Lipid biosynthesis</keyword>
<keyword id="KW-0443">Lipid metabolism</keyword>
<keyword id="KW-0472">Membrane</keyword>
<keyword id="KW-0594">Phospholipid biosynthesis</keyword>
<keyword id="KW-1208">Phospholipid metabolism</keyword>
<keyword id="KW-0808">Transferase</keyword>
<dbReference type="EC" id="2.3.1.15" evidence="1"/>
<dbReference type="EMBL" id="AE008923">
    <property type="protein sequence ID" value="AAM39105.1"/>
    <property type="molecule type" value="Genomic_DNA"/>
</dbReference>
<dbReference type="SMR" id="Q8PES0"/>
<dbReference type="KEGG" id="xac:XAC4270"/>
<dbReference type="eggNOG" id="COG2937">
    <property type="taxonomic scope" value="Bacteria"/>
</dbReference>
<dbReference type="HOGENOM" id="CLU_015407_0_0_6"/>
<dbReference type="UniPathway" id="UPA00557">
    <property type="reaction ID" value="UER00612"/>
</dbReference>
<dbReference type="Proteomes" id="UP000000576">
    <property type="component" value="Chromosome"/>
</dbReference>
<dbReference type="GO" id="GO:0005886">
    <property type="term" value="C:plasma membrane"/>
    <property type="evidence" value="ECO:0007669"/>
    <property type="project" value="UniProtKB-SubCell"/>
</dbReference>
<dbReference type="GO" id="GO:0004366">
    <property type="term" value="F:glycerol-3-phosphate O-acyltransferase activity"/>
    <property type="evidence" value="ECO:0007669"/>
    <property type="project" value="UniProtKB-UniRule"/>
</dbReference>
<dbReference type="GO" id="GO:0016024">
    <property type="term" value="P:CDP-diacylglycerol biosynthetic process"/>
    <property type="evidence" value="ECO:0007669"/>
    <property type="project" value="UniProtKB-UniRule"/>
</dbReference>
<dbReference type="GO" id="GO:0006631">
    <property type="term" value="P:fatty acid metabolic process"/>
    <property type="evidence" value="ECO:0007669"/>
    <property type="project" value="TreeGrafter"/>
</dbReference>
<dbReference type="CDD" id="cd07993">
    <property type="entry name" value="LPLAT_DHAPAT-like"/>
    <property type="match status" value="1"/>
</dbReference>
<dbReference type="HAMAP" id="MF_00393">
    <property type="entry name" value="Glyc3P_acyltrans"/>
    <property type="match status" value="1"/>
</dbReference>
<dbReference type="InterPro" id="IPR022284">
    <property type="entry name" value="GPAT/DHAPAT"/>
</dbReference>
<dbReference type="InterPro" id="IPR045520">
    <property type="entry name" value="GPAT/DHAPAT_C"/>
</dbReference>
<dbReference type="InterPro" id="IPR041728">
    <property type="entry name" value="GPAT/DHAPAT_LPLAT"/>
</dbReference>
<dbReference type="InterPro" id="IPR028354">
    <property type="entry name" value="GPAT_PlsB"/>
</dbReference>
<dbReference type="InterPro" id="IPR002123">
    <property type="entry name" value="Plipid/glycerol_acylTrfase"/>
</dbReference>
<dbReference type="NCBIfam" id="TIGR03703">
    <property type="entry name" value="plsB"/>
    <property type="match status" value="1"/>
</dbReference>
<dbReference type="NCBIfam" id="NF003441">
    <property type="entry name" value="PRK04974.1"/>
    <property type="match status" value="1"/>
</dbReference>
<dbReference type="PANTHER" id="PTHR12563:SF17">
    <property type="entry name" value="DIHYDROXYACETONE PHOSPHATE ACYLTRANSFERASE"/>
    <property type="match status" value="1"/>
</dbReference>
<dbReference type="PANTHER" id="PTHR12563">
    <property type="entry name" value="GLYCEROL-3-PHOSPHATE ACYLTRANSFERASE"/>
    <property type="match status" value="1"/>
</dbReference>
<dbReference type="Pfam" id="PF01553">
    <property type="entry name" value="Acyltransferase"/>
    <property type="match status" value="1"/>
</dbReference>
<dbReference type="Pfam" id="PF19277">
    <property type="entry name" value="GPAT_C"/>
    <property type="match status" value="1"/>
</dbReference>
<dbReference type="PIRSF" id="PIRSF500064">
    <property type="entry name" value="GPAT"/>
    <property type="match status" value="1"/>
</dbReference>
<dbReference type="PIRSF" id="PIRSF000437">
    <property type="entry name" value="GPAT_DHAPAT"/>
    <property type="match status" value="1"/>
</dbReference>
<dbReference type="SMART" id="SM00563">
    <property type="entry name" value="PlsC"/>
    <property type="match status" value="1"/>
</dbReference>
<dbReference type="SUPFAM" id="SSF69593">
    <property type="entry name" value="Glycerol-3-phosphate (1)-acyltransferase"/>
    <property type="match status" value="1"/>
</dbReference>
<name>PLSB_XANAC</name>
<gene>
    <name evidence="1" type="primary">plsB</name>
    <name type="ordered locus">XAC4270</name>
</gene>
<reference key="1">
    <citation type="journal article" date="2002" name="Nature">
        <title>Comparison of the genomes of two Xanthomonas pathogens with differing host specificities.</title>
        <authorList>
            <person name="da Silva A.C.R."/>
            <person name="Ferro J.A."/>
            <person name="Reinach F.C."/>
            <person name="Farah C.S."/>
            <person name="Furlan L.R."/>
            <person name="Quaggio R.B."/>
            <person name="Monteiro-Vitorello C.B."/>
            <person name="Van Sluys M.A."/>
            <person name="Almeida N.F. Jr."/>
            <person name="Alves L.M.C."/>
            <person name="do Amaral A.M."/>
            <person name="Bertolini M.C."/>
            <person name="Camargo L.E.A."/>
            <person name="Camarotte G."/>
            <person name="Cannavan F."/>
            <person name="Cardozo J."/>
            <person name="Chambergo F."/>
            <person name="Ciapina L.P."/>
            <person name="Cicarelli R.M.B."/>
            <person name="Coutinho L.L."/>
            <person name="Cursino-Santos J.R."/>
            <person name="El-Dorry H."/>
            <person name="Faria J.B."/>
            <person name="Ferreira A.J.S."/>
            <person name="Ferreira R.C.C."/>
            <person name="Ferro M.I.T."/>
            <person name="Formighieri E.F."/>
            <person name="Franco M.C."/>
            <person name="Greggio C.C."/>
            <person name="Gruber A."/>
            <person name="Katsuyama A.M."/>
            <person name="Kishi L.T."/>
            <person name="Leite R.P."/>
            <person name="Lemos E.G.M."/>
            <person name="Lemos M.V.F."/>
            <person name="Locali E.C."/>
            <person name="Machado M.A."/>
            <person name="Madeira A.M.B.N."/>
            <person name="Martinez-Rossi N.M."/>
            <person name="Martins E.C."/>
            <person name="Meidanis J."/>
            <person name="Menck C.F.M."/>
            <person name="Miyaki C.Y."/>
            <person name="Moon D.H."/>
            <person name="Moreira L.M."/>
            <person name="Novo M.T.M."/>
            <person name="Okura V.K."/>
            <person name="Oliveira M.C."/>
            <person name="Oliveira V.R."/>
            <person name="Pereira H.A."/>
            <person name="Rossi A."/>
            <person name="Sena J.A.D."/>
            <person name="Silva C."/>
            <person name="de Souza R.F."/>
            <person name="Spinola L.A.F."/>
            <person name="Takita M.A."/>
            <person name="Tamura R.E."/>
            <person name="Teixeira E.C."/>
            <person name="Tezza R.I.D."/>
            <person name="Trindade dos Santos M."/>
            <person name="Truffi D."/>
            <person name="Tsai S.M."/>
            <person name="White F.F."/>
            <person name="Setubal J.C."/>
            <person name="Kitajima J.P."/>
        </authorList>
    </citation>
    <scope>NUCLEOTIDE SEQUENCE [LARGE SCALE GENOMIC DNA]</scope>
    <source>
        <strain>306</strain>
    </source>
</reference>
<sequence length="885" mass="98468">MPEQNPLPFPDGQPSPPSTAAADTGATAAALPLAEPVPPAVAPSIAPSVAAARSGKRPWWARLLGRLADPWLSLTIEPDQPGRYDDGRPVVYVLEDYGMSNALILDKACREVGLPSPLVPLPGDPLERKRAYLALSRRSSSNSLIPEQRGGKTHSDSLAKLLQAHRVRADLDVHLVPVSIFVGRAPDKQSGWFAVLFSENWALVGRFRRLLSVLLNGRTTIVRFAPPISLRQTMAEGLPPERTLRKLQRVLRTHFRRIREAVIGPDLSTRRLLVDQVLAAESVREAIAIQAKRDNSKPVDAWRKAHAYAWEIAADYSSPVVRSASFLLTHVWNRIYAGVLVHHLDKLKQAAPGHEVVYVPSHRSHMDYLLLSYLLYERGIVPPHIVAGINLNLPVVGTLLRKGGAFFIRRSIKGNALYSAVLSEYVAQLVAGGYSIEYFVEGGRSRTGRLLQPKGGMIAMTLRAYLRQPRKPVLFQPVYIGYEKLMEGNSYLDELTGRPKEKESIWGLLWSIPKVLKQNYGQVVVNFGEPIALNDVLAKHAPDWDGQPLPEDEKPTWLAPAVDMLSTQIQTRINCAADVNPINLLALALLSTPKHAMGEADLIAQIELCKKLLAEMPYSDRVTVTPHTPARIITHAEEINVLTRVSHPLGDVLSVSGDTAVLLSYFRNNVLHLFTASSWVACCFQNNRRMSRAGLLRLGRTVYPFLQAELFLPWSEDRFAERIEQTIDMFVREGLLLNVTDDDGGILARNTGQTDEVFRLRAIGHSLQQAFERYYIAISVLVKNGPGVLGAGELESLCQQAAQRLSLLYAPAAPEFFDKTLFRGFIQKLRELRLVWPDENSKLMFDERLDAWAKDAKFILGRELRHTIERVSPAAAKPDVVVPPQ</sequence>
<accession>Q8PES0</accession>
<protein>
    <recommendedName>
        <fullName evidence="1">Glycerol-3-phosphate acyltransferase</fullName>
        <shortName evidence="1">GPAT</shortName>
        <ecNumber evidence="1">2.3.1.15</ecNumber>
    </recommendedName>
</protein>
<proteinExistence type="inferred from homology"/>
<organism>
    <name type="scientific">Xanthomonas axonopodis pv. citri (strain 306)</name>
    <dbReference type="NCBI Taxonomy" id="190486"/>
    <lineage>
        <taxon>Bacteria</taxon>
        <taxon>Pseudomonadati</taxon>
        <taxon>Pseudomonadota</taxon>
        <taxon>Gammaproteobacteria</taxon>
        <taxon>Lysobacterales</taxon>
        <taxon>Lysobacteraceae</taxon>
        <taxon>Xanthomonas</taxon>
    </lineage>
</organism>
<feature type="chain" id="PRO_0000195239" description="Glycerol-3-phosphate acyltransferase">
    <location>
        <begin position="1"/>
        <end position="885"/>
    </location>
</feature>
<feature type="region of interest" description="Disordered" evidence="2">
    <location>
        <begin position="1"/>
        <end position="26"/>
    </location>
</feature>
<feature type="short sequence motif" description="HXXXXD motif">
    <location>
        <begin position="362"/>
        <end position="367"/>
    </location>
</feature>
<feature type="compositionally biased region" description="Pro residues" evidence="2">
    <location>
        <begin position="1"/>
        <end position="17"/>
    </location>
</feature>
<comment type="catalytic activity">
    <reaction evidence="1">
        <text>sn-glycerol 3-phosphate + an acyl-CoA = a 1-acyl-sn-glycero-3-phosphate + CoA</text>
        <dbReference type="Rhea" id="RHEA:15325"/>
        <dbReference type="ChEBI" id="CHEBI:57287"/>
        <dbReference type="ChEBI" id="CHEBI:57597"/>
        <dbReference type="ChEBI" id="CHEBI:57970"/>
        <dbReference type="ChEBI" id="CHEBI:58342"/>
        <dbReference type="EC" id="2.3.1.15"/>
    </reaction>
</comment>
<comment type="pathway">
    <text evidence="1">Phospholipid metabolism; CDP-diacylglycerol biosynthesis; CDP-diacylglycerol from sn-glycerol 3-phosphate: step 1/3.</text>
</comment>
<comment type="subcellular location">
    <subcellularLocation>
        <location evidence="1">Cell inner membrane</location>
        <topology evidence="1">Peripheral membrane protein</topology>
        <orientation evidence="1">Cytoplasmic side</orientation>
    </subcellularLocation>
</comment>
<comment type="domain">
    <text evidence="1">The HXXXXD motif is essential for acyltransferase activity and may constitute the binding site for the phosphate moiety of the glycerol-3-phosphate.</text>
</comment>
<comment type="similarity">
    <text evidence="1">Belongs to the GPAT/DAPAT family.</text>
</comment>
<evidence type="ECO:0000255" key="1">
    <source>
        <dbReference type="HAMAP-Rule" id="MF_00393"/>
    </source>
</evidence>
<evidence type="ECO:0000256" key="2">
    <source>
        <dbReference type="SAM" id="MobiDB-lite"/>
    </source>
</evidence>